<organism>
    <name type="scientific">Cereibacter sphaeroides (strain ATCC 17029 / ATH 2.4.9)</name>
    <name type="common">Rhodobacter sphaeroides</name>
    <dbReference type="NCBI Taxonomy" id="349101"/>
    <lineage>
        <taxon>Bacteria</taxon>
        <taxon>Pseudomonadati</taxon>
        <taxon>Pseudomonadota</taxon>
        <taxon>Alphaproteobacteria</taxon>
        <taxon>Rhodobacterales</taxon>
        <taxon>Paracoccaceae</taxon>
        <taxon>Cereibacter</taxon>
    </lineage>
</organism>
<feature type="chain" id="PRO_0000353418" description="DNA-directed RNA polymerase subunit beta'">
    <location>
        <begin position="1"/>
        <end position="1415"/>
    </location>
</feature>
<feature type="binding site" evidence="1">
    <location>
        <position position="72"/>
    </location>
    <ligand>
        <name>Zn(2+)</name>
        <dbReference type="ChEBI" id="CHEBI:29105"/>
        <label>1</label>
    </ligand>
</feature>
<feature type="binding site" evidence="1">
    <location>
        <position position="74"/>
    </location>
    <ligand>
        <name>Zn(2+)</name>
        <dbReference type="ChEBI" id="CHEBI:29105"/>
        <label>1</label>
    </ligand>
</feature>
<feature type="binding site" evidence="1">
    <location>
        <position position="87"/>
    </location>
    <ligand>
        <name>Zn(2+)</name>
        <dbReference type="ChEBI" id="CHEBI:29105"/>
        <label>1</label>
    </ligand>
</feature>
<feature type="binding site" evidence="1">
    <location>
        <position position="90"/>
    </location>
    <ligand>
        <name>Zn(2+)</name>
        <dbReference type="ChEBI" id="CHEBI:29105"/>
        <label>1</label>
    </ligand>
</feature>
<feature type="binding site" evidence="1">
    <location>
        <position position="463"/>
    </location>
    <ligand>
        <name>Mg(2+)</name>
        <dbReference type="ChEBI" id="CHEBI:18420"/>
    </ligand>
</feature>
<feature type="binding site" evidence="1">
    <location>
        <position position="465"/>
    </location>
    <ligand>
        <name>Mg(2+)</name>
        <dbReference type="ChEBI" id="CHEBI:18420"/>
    </ligand>
</feature>
<feature type="binding site" evidence="1">
    <location>
        <position position="467"/>
    </location>
    <ligand>
        <name>Mg(2+)</name>
        <dbReference type="ChEBI" id="CHEBI:18420"/>
    </ligand>
</feature>
<feature type="binding site" evidence="1">
    <location>
        <position position="811"/>
    </location>
    <ligand>
        <name>Zn(2+)</name>
        <dbReference type="ChEBI" id="CHEBI:29105"/>
        <label>2</label>
    </ligand>
</feature>
<feature type="binding site" evidence="1">
    <location>
        <position position="885"/>
    </location>
    <ligand>
        <name>Zn(2+)</name>
        <dbReference type="ChEBI" id="CHEBI:29105"/>
        <label>2</label>
    </ligand>
</feature>
<feature type="binding site" evidence="1">
    <location>
        <position position="892"/>
    </location>
    <ligand>
        <name>Zn(2+)</name>
        <dbReference type="ChEBI" id="CHEBI:29105"/>
        <label>2</label>
    </ligand>
</feature>
<feature type="binding site" evidence="1">
    <location>
        <position position="895"/>
    </location>
    <ligand>
        <name>Zn(2+)</name>
        <dbReference type="ChEBI" id="CHEBI:29105"/>
        <label>2</label>
    </ligand>
</feature>
<protein>
    <recommendedName>
        <fullName evidence="1">DNA-directed RNA polymerase subunit beta'</fullName>
        <shortName evidence="1">RNAP subunit beta'</shortName>
        <ecNumber evidence="1">2.7.7.6</ecNumber>
    </recommendedName>
    <alternativeName>
        <fullName evidence="1">RNA polymerase subunit beta'</fullName>
    </alternativeName>
    <alternativeName>
        <fullName evidence="1">Transcriptase subunit beta'</fullName>
    </alternativeName>
</protein>
<evidence type="ECO:0000255" key="1">
    <source>
        <dbReference type="HAMAP-Rule" id="MF_01322"/>
    </source>
</evidence>
<comment type="function">
    <text evidence="1">DNA-dependent RNA polymerase catalyzes the transcription of DNA into RNA using the four ribonucleoside triphosphates as substrates.</text>
</comment>
<comment type="catalytic activity">
    <reaction evidence="1">
        <text>RNA(n) + a ribonucleoside 5'-triphosphate = RNA(n+1) + diphosphate</text>
        <dbReference type="Rhea" id="RHEA:21248"/>
        <dbReference type="Rhea" id="RHEA-COMP:14527"/>
        <dbReference type="Rhea" id="RHEA-COMP:17342"/>
        <dbReference type="ChEBI" id="CHEBI:33019"/>
        <dbReference type="ChEBI" id="CHEBI:61557"/>
        <dbReference type="ChEBI" id="CHEBI:140395"/>
        <dbReference type="EC" id="2.7.7.6"/>
    </reaction>
</comment>
<comment type="cofactor">
    <cofactor evidence="1">
        <name>Mg(2+)</name>
        <dbReference type="ChEBI" id="CHEBI:18420"/>
    </cofactor>
    <text evidence="1">Binds 1 Mg(2+) ion per subunit.</text>
</comment>
<comment type="cofactor">
    <cofactor evidence="1">
        <name>Zn(2+)</name>
        <dbReference type="ChEBI" id="CHEBI:29105"/>
    </cofactor>
    <text evidence="1">Binds 2 Zn(2+) ions per subunit.</text>
</comment>
<comment type="subunit">
    <text evidence="1">The RNAP catalytic core consists of 2 alpha, 1 beta, 1 beta' and 1 omega subunit. When a sigma factor is associated with the core the holoenzyme is formed, which can initiate transcription.</text>
</comment>
<comment type="similarity">
    <text evidence="1">Belongs to the RNA polymerase beta' chain family.</text>
</comment>
<proteinExistence type="inferred from homology"/>
<dbReference type="EC" id="2.7.7.6" evidence="1"/>
<dbReference type="EMBL" id="CP000577">
    <property type="protein sequence ID" value="ABN75456.1"/>
    <property type="molecule type" value="Genomic_DNA"/>
</dbReference>
<dbReference type="EMBL" id="CP000577">
    <property type="protein sequence ID" value="ABN75470.1"/>
    <property type="molecule type" value="Genomic_DNA"/>
</dbReference>
<dbReference type="SMR" id="A3PGJ0"/>
<dbReference type="KEGG" id="rsh:Rsph17029_0340"/>
<dbReference type="KEGG" id="rsh:Rsph17029_0354"/>
<dbReference type="HOGENOM" id="CLU_000524_3_1_5"/>
<dbReference type="GO" id="GO:0000428">
    <property type="term" value="C:DNA-directed RNA polymerase complex"/>
    <property type="evidence" value="ECO:0007669"/>
    <property type="project" value="UniProtKB-KW"/>
</dbReference>
<dbReference type="GO" id="GO:0003677">
    <property type="term" value="F:DNA binding"/>
    <property type="evidence" value="ECO:0007669"/>
    <property type="project" value="UniProtKB-UniRule"/>
</dbReference>
<dbReference type="GO" id="GO:0003899">
    <property type="term" value="F:DNA-directed RNA polymerase activity"/>
    <property type="evidence" value="ECO:0007669"/>
    <property type="project" value="UniProtKB-UniRule"/>
</dbReference>
<dbReference type="GO" id="GO:0000287">
    <property type="term" value="F:magnesium ion binding"/>
    <property type="evidence" value="ECO:0007669"/>
    <property type="project" value="UniProtKB-UniRule"/>
</dbReference>
<dbReference type="GO" id="GO:0008270">
    <property type="term" value="F:zinc ion binding"/>
    <property type="evidence" value="ECO:0007669"/>
    <property type="project" value="UniProtKB-UniRule"/>
</dbReference>
<dbReference type="GO" id="GO:0006351">
    <property type="term" value="P:DNA-templated transcription"/>
    <property type="evidence" value="ECO:0007669"/>
    <property type="project" value="UniProtKB-UniRule"/>
</dbReference>
<dbReference type="CDD" id="cd02655">
    <property type="entry name" value="RNAP_beta'_C"/>
    <property type="match status" value="1"/>
</dbReference>
<dbReference type="CDD" id="cd01609">
    <property type="entry name" value="RNAP_beta'_N"/>
    <property type="match status" value="1"/>
</dbReference>
<dbReference type="FunFam" id="4.10.860.120:FF:000001">
    <property type="entry name" value="DNA-directed RNA polymerase subunit beta"/>
    <property type="match status" value="1"/>
</dbReference>
<dbReference type="Gene3D" id="1.10.132.30">
    <property type="match status" value="1"/>
</dbReference>
<dbReference type="Gene3D" id="1.10.150.390">
    <property type="match status" value="1"/>
</dbReference>
<dbReference type="Gene3D" id="1.10.1790.20">
    <property type="match status" value="1"/>
</dbReference>
<dbReference type="Gene3D" id="1.10.40.90">
    <property type="match status" value="1"/>
</dbReference>
<dbReference type="Gene3D" id="2.40.40.20">
    <property type="match status" value="1"/>
</dbReference>
<dbReference type="Gene3D" id="2.40.50.100">
    <property type="match status" value="3"/>
</dbReference>
<dbReference type="Gene3D" id="4.10.860.120">
    <property type="entry name" value="RNA polymerase II, clamp domain"/>
    <property type="match status" value="1"/>
</dbReference>
<dbReference type="Gene3D" id="1.10.274.100">
    <property type="entry name" value="RNA polymerase Rpb1, domain 3"/>
    <property type="match status" value="2"/>
</dbReference>
<dbReference type="HAMAP" id="MF_01322">
    <property type="entry name" value="RNApol_bact_RpoC"/>
    <property type="match status" value="1"/>
</dbReference>
<dbReference type="InterPro" id="IPR045867">
    <property type="entry name" value="DNA-dir_RpoC_beta_prime"/>
</dbReference>
<dbReference type="InterPro" id="IPR012754">
    <property type="entry name" value="DNA-dir_RpoC_beta_prime_bact"/>
</dbReference>
<dbReference type="InterPro" id="IPR000722">
    <property type="entry name" value="RNA_pol_asu"/>
</dbReference>
<dbReference type="InterPro" id="IPR006592">
    <property type="entry name" value="RNA_pol_N"/>
</dbReference>
<dbReference type="InterPro" id="IPR007080">
    <property type="entry name" value="RNA_pol_Rpb1_1"/>
</dbReference>
<dbReference type="InterPro" id="IPR007066">
    <property type="entry name" value="RNA_pol_Rpb1_3"/>
</dbReference>
<dbReference type="InterPro" id="IPR042102">
    <property type="entry name" value="RNA_pol_Rpb1_3_sf"/>
</dbReference>
<dbReference type="InterPro" id="IPR007083">
    <property type="entry name" value="RNA_pol_Rpb1_4"/>
</dbReference>
<dbReference type="InterPro" id="IPR007081">
    <property type="entry name" value="RNA_pol_Rpb1_5"/>
</dbReference>
<dbReference type="InterPro" id="IPR044893">
    <property type="entry name" value="RNA_pol_Rpb1_clamp_domain"/>
</dbReference>
<dbReference type="InterPro" id="IPR038120">
    <property type="entry name" value="Rpb1_funnel_sf"/>
</dbReference>
<dbReference type="NCBIfam" id="TIGR02386">
    <property type="entry name" value="rpoC_TIGR"/>
    <property type="match status" value="1"/>
</dbReference>
<dbReference type="PANTHER" id="PTHR19376">
    <property type="entry name" value="DNA-DIRECTED RNA POLYMERASE"/>
    <property type="match status" value="1"/>
</dbReference>
<dbReference type="PANTHER" id="PTHR19376:SF54">
    <property type="entry name" value="DNA-DIRECTED RNA POLYMERASE SUBUNIT BETA"/>
    <property type="match status" value="1"/>
</dbReference>
<dbReference type="Pfam" id="PF04997">
    <property type="entry name" value="RNA_pol_Rpb1_1"/>
    <property type="match status" value="1"/>
</dbReference>
<dbReference type="Pfam" id="PF00623">
    <property type="entry name" value="RNA_pol_Rpb1_2"/>
    <property type="match status" value="2"/>
</dbReference>
<dbReference type="Pfam" id="PF04983">
    <property type="entry name" value="RNA_pol_Rpb1_3"/>
    <property type="match status" value="1"/>
</dbReference>
<dbReference type="Pfam" id="PF05000">
    <property type="entry name" value="RNA_pol_Rpb1_4"/>
    <property type="match status" value="1"/>
</dbReference>
<dbReference type="Pfam" id="PF04998">
    <property type="entry name" value="RNA_pol_Rpb1_5"/>
    <property type="match status" value="1"/>
</dbReference>
<dbReference type="SMART" id="SM00663">
    <property type="entry name" value="RPOLA_N"/>
    <property type="match status" value="1"/>
</dbReference>
<dbReference type="SUPFAM" id="SSF64484">
    <property type="entry name" value="beta and beta-prime subunits of DNA dependent RNA-polymerase"/>
    <property type="match status" value="1"/>
</dbReference>
<sequence>MNQELSTNPFNPVAPVKTFDEIKISLASPERILSWSYGEIKKPETINYRTFKPERDGLFCARIFGPIKDYECLCGKYKRMKYRGVVCEKCGVEVTLQKVRRERMGHIELAAPVAHIWFLKSLPSRIGLMLDMTLRDLERILYFENYVVIEPGLTDLTYGQLMTEEEFLDAQDQYGADAFTANIGAEAIREMLSAIDLEQTAETLREELKEATGELKPKKIIKRLKIVESFLESGNRPEWMILTVLPVIPPELRPLVPLDGGRFATSDLNDLYRRVINRNNRLKRLIELRAPDIIVRNEKRMLQEAVDALFDNGRRGRVITGTNKRPLKSLSDMLKGKQGRFRQNLLGKRVDFSGRSVIVTGPELKLHQCGLPKKMALELFKPFIYSRLEAKGLSSTVKQAKKLVEKERPEVWDILDEVIREHPVLLNRAPTLHRLGIQAFEPILIEGKAIQLHPLVCSAFNADFDGDQMAVHVPLSLEAQLEARVLMMSTNNVLSPANGAPIIVPSQDMVLGLYYTTMERRGMKGEGMAFSSVEEVEHALAAGEVHLHATITARIKQIDEEGNEVVKRYQTTPGRLRLGNLLPLNAKAPFELVNRLLRKKDVQNVIDTVYRYCGQKESVIFCDQIMGMGFREAFKAGISFGKDDMLIPDTKWPIVNEVRDQVKEFEQQYMDGLITQGEKYNKVVDAWSKCSDKVAGEMMAEISAVRYDDAGAEKEPNSVYMMSHSGARGSPAQMKQLGGMRGLMAKPNGEIIETPIISNFKEGLTVLEYFNSTHGARKGLADTALKTANSGYLTRRLVDVAQDCIVRTHDCGTENAITASAAVNEGEVVSPLAERVLGRVAAEDILVPGSDEVIVARGELIDERRADLVDQANVASVRIRSPLTCEAEEGVCAMCYGRDLARGTLVNIGEAVGIIAAQSIGEPGTQLTMRTFHIGGIAQGGQQSFLEASQEGRIEFRNPNLLENANGEQIVMGRNMQLAIIDEAGQERATHKLTYGAKVHVKDGQTVKRATRLFEWDPYTLPIIAEKAGVARFVDLVSGISVREDTDEATGMTQKIVSDWRSTPKGGDLKPEIIIMNPETGDPMRNEAGNPISYPMSVEAILSVEDGQTVRAGDVVARIPREGARTKDITGGLPRVAELFEARRPKDHAIIAENDGYVRFGKDYKNKRRITIEPVDDTLNSVEYMVPKGKHIPVQEGDFVQKGDYIMDGNPAPHDILRILGVEALANYMIDEVQEVYRLQGVKINDKHIEVIVRQMLQKYEILDSGETTLLKGEHVDKAELDEVNQKAMDHGMRPAHAEPILLGITKASLQTRSFISAASFQETTRVLTEASVQGKRDKLVGLKENVIVGRLIPAGTGGATSRVKKIAHDRDQKVIDTRRAEAESAAALAAPTDEVIDLGSEDSGLVETVENREE</sequence>
<accession>A3PGJ0</accession>
<name>RPOC_CERS1</name>
<reference key="1">
    <citation type="submission" date="2007-02" db="EMBL/GenBank/DDBJ databases">
        <title>Complete sequence of chromosome 1 of Rhodobacter sphaeroides ATCC 17029.</title>
        <authorList>
            <person name="Copeland A."/>
            <person name="Lucas S."/>
            <person name="Lapidus A."/>
            <person name="Barry K."/>
            <person name="Detter J.C."/>
            <person name="Glavina del Rio T."/>
            <person name="Hammon N."/>
            <person name="Israni S."/>
            <person name="Dalin E."/>
            <person name="Tice H."/>
            <person name="Pitluck S."/>
            <person name="Kiss H."/>
            <person name="Brettin T."/>
            <person name="Bruce D."/>
            <person name="Han C."/>
            <person name="Tapia R."/>
            <person name="Gilna P."/>
            <person name="Schmutz J."/>
            <person name="Larimer F."/>
            <person name="Land M."/>
            <person name="Hauser L."/>
            <person name="Kyrpides N."/>
            <person name="Mikhailova N."/>
            <person name="Richardson P."/>
            <person name="Mackenzie C."/>
            <person name="Choudhary M."/>
            <person name="Donohue T.J."/>
            <person name="Kaplan S."/>
        </authorList>
    </citation>
    <scope>NUCLEOTIDE SEQUENCE [LARGE SCALE GENOMIC DNA]</scope>
    <source>
        <strain>ATCC 17029 / ATH 2.4.9</strain>
    </source>
</reference>
<gene>
    <name evidence="1" type="primary">rpoC1</name>
    <name type="ordered locus">Rsph17029_0340</name>
</gene>
<gene>
    <name evidence="1" type="primary">rpoC2</name>
    <name type="ordered locus">Rsph17029_0354</name>
</gene>
<keyword id="KW-0240">DNA-directed RNA polymerase</keyword>
<keyword id="KW-0460">Magnesium</keyword>
<keyword id="KW-0479">Metal-binding</keyword>
<keyword id="KW-0548">Nucleotidyltransferase</keyword>
<keyword id="KW-0804">Transcription</keyword>
<keyword id="KW-0808">Transferase</keyword>
<keyword id="KW-0862">Zinc</keyword>